<name>YHDB_BACSU</name>
<sequence>MDYADYDKALYYTHRSQWDNLLILMVRTEDDLLSKRIEHFLHAYHFEQDYAVLEKMLYSLLRYIDHATELTYEDQIALLT</sequence>
<proteinExistence type="predicted"/>
<gene>
    <name type="primary">yhdB</name>
    <name type="ordered locus">BSU09350</name>
</gene>
<accession>O07530</accession>
<accession>Q796X9</accession>
<keyword id="KW-1185">Reference proteome</keyword>
<reference key="1">
    <citation type="journal article" date="1998" name="Microbiology">
        <title>The 172 kb prkA-addAB region from 83 degrees to 97 degrees of the Bacillus subtilis chromosome contains several dysfunctional genes, the glyB marker, many genes encoding transporter proteins, and the ubiquitous hit gene.</title>
        <authorList>
            <person name="Noback M.A."/>
            <person name="Holsappel S."/>
            <person name="Kiewiet R."/>
            <person name="Terpstra P."/>
            <person name="Wambutt R."/>
            <person name="Wedler H."/>
            <person name="Venema G."/>
            <person name="Bron S."/>
        </authorList>
    </citation>
    <scope>NUCLEOTIDE SEQUENCE [GENOMIC DNA]</scope>
</reference>
<reference key="2">
    <citation type="journal article" date="1997" name="Nature">
        <title>The complete genome sequence of the Gram-positive bacterium Bacillus subtilis.</title>
        <authorList>
            <person name="Kunst F."/>
            <person name="Ogasawara N."/>
            <person name="Moszer I."/>
            <person name="Albertini A.M."/>
            <person name="Alloni G."/>
            <person name="Azevedo V."/>
            <person name="Bertero M.G."/>
            <person name="Bessieres P."/>
            <person name="Bolotin A."/>
            <person name="Borchert S."/>
            <person name="Borriss R."/>
            <person name="Boursier L."/>
            <person name="Brans A."/>
            <person name="Braun M."/>
            <person name="Brignell S.C."/>
            <person name="Bron S."/>
            <person name="Brouillet S."/>
            <person name="Bruschi C.V."/>
            <person name="Caldwell B."/>
            <person name="Capuano V."/>
            <person name="Carter N.M."/>
            <person name="Choi S.-K."/>
            <person name="Codani J.-J."/>
            <person name="Connerton I.F."/>
            <person name="Cummings N.J."/>
            <person name="Daniel R.A."/>
            <person name="Denizot F."/>
            <person name="Devine K.M."/>
            <person name="Duesterhoeft A."/>
            <person name="Ehrlich S.D."/>
            <person name="Emmerson P.T."/>
            <person name="Entian K.-D."/>
            <person name="Errington J."/>
            <person name="Fabret C."/>
            <person name="Ferrari E."/>
            <person name="Foulger D."/>
            <person name="Fritz C."/>
            <person name="Fujita M."/>
            <person name="Fujita Y."/>
            <person name="Fuma S."/>
            <person name="Galizzi A."/>
            <person name="Galleron N."/>
            <person name="Ghim S.-Y."/>
            <person name="Glaser P."/>
            <person name="Goffeau A."/>
            <person name="Golightly E.J."/>
            <person name="Grandi G."/>
            <person name="Guiseppi G."/>
            <person name="Guy B.J."/>
            <person name="Haga K."/>
            <person name="Haiech J."/>
            <person name="Harwood C.R."/>
            <person name="Henaut A."/>
            <person name="Hilbert H."/>
            <person name="Holsappel S."/>
            <person name="Hosono S."/>
            <person name="Hullo M.-F."/>
            <person name="Itaya M."/>
            <person name="Jones L.-M."/>
            <person name="Joris B."/>
            <person name="Karamata D."/>
            <person name="Kasahara Y."/>
            <person name="Klaerr-Blanchard M."/>
            <person name="Klein C."/>
            <person name="Kobayashi Y."/>
            <person name="Koetter P."/>
            <person name="Koningstein G."/>
            <person name="Krogh S."/>
            <person name="Kumano M."/>
            <person name="Kurita K."/>
            <person name="Lapidus A."/>
            <person name="Lardinois S."/>
            <person name="Lauber J."/>
            <person name="Lazarevic V."/>
            <person name="Lee S.-M."/>
            <person name="Levine A."/>
            <person name="Liu H."/>
            <person name="Masuda S."/>
            <person name="Mauel C."/>
            <person name="Medigue C."/>
            <person name="Medina N."/>
            <person name="Mellado R.P."/>
            <person name="Mizuno M."/>
            <person name="Moestl D."/>
            <person name="Nakai S."/>
            <person name="Noback M."/>
            <person name="Noone D."/>
            <person name="O'Reilly M."/>
            <person name="Ogawa K."/>
            <person name="Ogiwara A."/>
            <person name="Oudega B."/>
            <person name="Park S.-H."/>
            <person name="Parro V."/>
            <person name="Pohl T.M."/>
            <person name="Portetelle D."/>
            <person name="Porwollik S."/>
            <person name="Prescott A.M."/>
            <person name="Presecan E."/>
            <person name="Pujic P."/>
            <person name="Purnelle B."/>
            <person name="Rapoport G."/>
            <person name="Rey M."/>
            <person name="Reynolds S."/>
            <person name="Rieger M."/>
            <person name="Rivolta C."/>
            <person name="Rocha E."/>
            <person name="Roche B."/>
            <person name="Rose M."/>
            <person name="Sadaie Y."/>
            <person name="Sato T."/>
            <person name="Scanlan E."/>
            <person name="Schleich S."/>
            <person name="Schroeter R."/>
            <person name="Scoffone F."/>
            <person name="Sekiguchi J."/>
            <person name="Sekowska A."/>
            <person name="Seror S.J."/>
            <person name="Serror P."/>
            <person name="Shin B.-S."/>
            <person name="Soldo B."/>
            <person name="Sorokin A."/>
            <person name="Tacconi E."/>
            <person name="Takagi T."/>
            <person name="Takahashi H."/>
            <person name="Takemaru K."/>
            <person name="Takeuchi M."/>
            <person name="Tamakoshi A."/>
            <person name="Tanaka T."/>
            <person name="Terpstra P."/>
            <person name="Tognoni A."/>
            <person name="Tosato V."/>
            <person name="Uchiyama S."/>
            <person name="Vandenbol M."/>
            <person name="Vannier F."/>
            <person name="Vassarotti A."/>
            <person name="Viari A."/>
            <person name="Wambutt R."/>
            <person name="Wedler E."/>
            <person name="Wedler H."/>
            <person name="Weitzenegger T."/>
            <person name="Winters P."/>
            <person name="Wipat A."/>
            <person name="Yamamoto H."/>
            <person name="Yamane K."/>
            <person name="Yasumoto K."/>
            <person name="Yata K."/>
            <person name="Yoshida K."/>
            <person name="Yoshikawa H.-F."/>
            <person name="Zumstein E."/>
            <person name="Yoshikawa H."/>
            <person name="Danchin A."/>
        </authorList>
    </citation>
    <scope>NUCLEOTIDE SEQUENCE [LARGE SCALE GENOMIC DNA]</scope>
    <source>
        <strain>168</strain>
    </source>
</reference>
<protein>
    <recommendedName>
        <fullName>Uncharacterized protein YhdB</fullName>
    </recommendedName>
</protein>
<dbReference type="EMBL" id="Y14079">
    <property type="protein sequence ID" value="CAA74435.1"/>
    <property type="molecule type" value="Genomic_DNA"/>
</dbReference>
<dbReference type="EMBL" id="AL009126">
    <property type="protein sequence ID" value="CAB12763.1"/>
    <property type="molecule type" value="Genomic_DNA"/>
</dbReference>
<dbReference type="PIR" id="H69824">
    <property type="entry name" value="H69824"/>
</dbReference>
<dbReference type="RefSeq" id="NP_388816.1">
    <property type="nucleotide sequence ID" value="NC_000964.3"/>
</dbReference>
<dbReference type="RefSeq" id="WP_003233373.1">
    <property type="nucleotide sequence ID" value="NZ_OZ025638.1"/>
</dbReference>
<dbReference type="FunCoup" id="O07530">
    <property type="interactions" value="79"/>
</dbReference>
<dbReference type="STRING" id="224308.BSU09350"/>
<dbReference type="PaxDb" id="224308-BSU09350"/>
<dbReference type="EnsemblBacteria" id="CAB12763">
    <property type="protein sequence ID" value="CAB12763"/>
    <property type="gene ID" value="BSU_09350"/>
</dbReference>
<dbReference type="GeneID" id="939272"/>
<dbReference type="KEGG" id="bsu:BSU09350"/>
<dbReference type="PATRIC" id="fig|224308.179.peg.1008"/>
<dbReference type="eggNOG" id="ENOG5032XW8">
    <property type="taxonomic scope" value="Bacteria"/>
</dbReference>
<dbReference type="InParanoid" id="O07530"/>
<dbReference type="OrthoDB" id="2691588at2"/>
<dbReference type="BioCyc" id="BSUB:BSU09350-MONOMER"/>
<dbReference type="Proteomes" id="UP000001570">
    <property type="component" value="Chromosome"/>
</dbReference>
<dbReference type="InterPro" id="IPR025431">
    <property type="entry name" value="YhdB-like"/>
</dbReference>
<dbReference type="Pfam" id="PF14148">
    <property type="entry name" value="YhdB"/>
    <property type="match status" value="1"/>
</dbReference>
<organism>
    <name type="scientific">Bacillus subtilis (strain 168)</name>
    <dbReference type="NCBI Taxonomy" id="224308"/>
    <lineage>
        <taxon>Bacteria</taxon>
        <taxon>Bacillati</taxon>
        <taxon>Bacillota</taxon>
        <taxon>Bacilli</taxon>
        <taxon>Bacillales</taxon>
        <taxon>Bacillaceae</taxon>
        <taxon>Bacillus</taxon>
    </lineage>
</organism>
<feature type="chain" id="PRO_0000360067" description="Uncharacterized protein YhdB">
    <location>
        <begin position="1"/>
        <end position="80"/>
    </location>
</feature>